<proteinExistence type="inferred from homology"/>
<protein>
    <recommendedName>
        <fullName evidence="1">Uridylate kinase</fullName>
        <shortName evidence="1">UK</shortName>
        <ecNumber evidence="1">2.7.4.22</ecNumber>
    </recommendedName>
    <alternativeName>
        <fullName evidence="1">Uridine monophosphate kinase</fullName>
        <shortName evidence="1">UMP kinase</shortName>
        <shortName evidence="1">UMPK</shortName>
    </alternativeName>
</protein>
<keyword id="KW-0067">ATP-binding</keyword>
<keyword id="KW-0963">Cytoplasm</keyword>
<keyword id="KW-0418">Kinase</keyword>
<keyword id="KW-0547">Nucleotide-binding</keyword>
<keyword id="KW-0665">Pyrimidine biosynthesis</keyword>
<keyword id="KW-0808">Transferase</keyword>
<sequence length="241" mass="26606">MWMHKKILLKLSGESLKGDSSYGIDPRTIKKIAWEIKEIKDLGVKIAIIVGAGNLWRGRTGEELGMDRSQADYMGMLGTIMNSLALQDALEQTNTITRVMTAFPVSSVAEPYIRRKAIRHLEKDRVVILGAGAGSPYFSTDTAAALRAAELNIDVILMAKNNIEGVYNKDPKKYQDAVLIKHIKHQQILSQRLAVMDITAASLCLENNIDILVFNMLKKGNIKKVVLKEGNIGTVISSKGE</sequence>
<organism>
    <name type="scientific">Aster yellows witches'-broom phytoplasma (strain AYWB)</name>
    <dbReference type="NCBI Taxonomy" id="322098"/>
    <lineage>
        <taxon>Bacteria</taxon>
        <taxon>Bacillati</taxon>
        <taxon>Mycoplasmatota</taxon>
        <taxon>Mollicutes</taxon>
        <taxon>Acholeplasmatales</taxon>
        <taxon>Acholeplasmataceae</taxon>
        <taxon>Candidatus Phytoplasma</taxon>
        <taxon>16SrI (Aster yellows group)</taxon>
    </lineage>
</organism>
<comment type="function">
    <text evidence="1">Catalyzes the reversible phosphorylation of UMP to UDP.</text>
</comment>
<comment type="catalytic activity">
    <reaction evidence="1">
        <text>UMP + ATP = UDP + ADP</text>
        <dbReference type="Rhea" id="RHEA:24400"/>
        <dbReference type="ChEBI" id="CHEBI:30616"/>
        <dbReference type="ChEBI" id="CHEBI:57865"/>
        <dbReference type="ChEBI" id="CHEBI:58223"/>
        <dbReference type="ChEBI" id="CHEBI:456216"/>
        <dbReference type="EC" id="2.7.4.22"/>
    </reaction>
</comment>
<comment type="activity regulation">
    <text evidence="1">Inhibited by UTP.</text>
</comment>
<comment type="pathway">
    <text evidence="1">Pyrimidine metabolism; CTP biosynthesis via de novo pathway; UDP from UMP (UMPK route): step 1/1.</text>
</comment>
<comment type="subunit">
    <text evidence="1">Homohexamer.</text>
</comment>
<comment type="subcellular location">
    <subcellularLocation>
        <location evidence="1">Cytoplasm</location>
    </subcellularLocation>
</comment>
<comment type="similarity">
    <text evidence="1">Belongs to the UMP kinase family.</text>
</comment>
<dbReference type="EC" id="2.7.4.22" evidence="1"/>
<dbReference type="EMBL" id="CP000061">
    <property type="protein sequence ID" value="ABC65669.1"/>
    <property type="molecule type" value="Genomic_DNA"/>
</dbReference>
<dbReference type="SMR" id="Q2NIS4"/>
<dbReference type="STRING" id="322098.AYWB_552"/>
<dbReference type="KEGG" id="ayw:AYWB_552"/>
<dbReference type="eggNOG" id="COG0528">
    <property type="taxonomic scope" value="Bacteria"/>
</dbReference>
<dbReference type="HOGENOM" id="CLU_033861_0_0_14"/>
<dbReference type="OrthoDB" id="9807458at2"/>
<dbReference type="PhylomeDB" id="Q2NIS4"/>
<dbReference type="UniPathway" id="UPA00159">
    <property type="reaction ID" value="UER00275"/>
</dbReference>
<dbReference type="Proteomes" id="UP000001934">
    <property type="component" value="Chromosome"/>
</dbReference>
<dbReference type="GO" id="GO:0005737">
    <property type="term" value="C:cytoplasm"/>
    <property type="evidence" value="ECO:0007669"/>
    <property type="project" value="UniProtKB-SubCell"/>
</dbReference>
<dbReference type="GO" id="GO:0005524">
    <property type="term" value="F:ATP binding"/>
    <property type="evidence" value="ECO:0007669"/>
    <property type="project" value="UniProtKB-KW"/>
</dbReference>
<dbReference type="GO" id="GO:0033862">
    <property type="term" value="F:UMP kinase activity"/>
    <property type="evidence" value="ECO:0007669"/>
    <property type="project" value="UniProtKB-EC"/>
</dbReference>
<dbReference type="GO" id="GO:0044210">
    <property type="term" value="P:'de novo' CTP biosynthetic process"/>
    <property type="evidence" value="ECO:0007669"/>
    <property type="project" value="UniProtKB-UniRule"/>
</dbReference>
<dbReference type="GO" id="GO:0006225">
    <property type="term" value="P:UDP biosynthetic process"/>
    <property type="evidence" value="ECO:0007669"/>
    <property type="project" value="TreeGrafter"/>
</dbReference>
<dbReference type="CDD" id="cd04254">
    <property type="entry name" value="AAK_UMPK-PyrH-Ec"/>
    <property type="match status" value="1"/>
</dbReference>
<dbReference type="FunFam" id="3.40.1160.10:FF:000001">
    <property type="entry name" value="Uridylate kinase"/>
    <property type="match status" value="1"/>
</dbReference>
<dbReference type="Gene3D" id="3.40.1160.10">
    <property type="entry name" value="Acetylglutamate kinase-like"/>
    <property type="match status" value="1"/>
</dbReference>
<dbReference type="HAMAP" id="MF_01220_B">
    <property type="entry name" value="PyrH_B"/>
    <property type="match status" value="1"/>
</dbReference>
<dbReference type="InterPro" id="IPR036393">
    <property type="entry name" value="AceGlu_kinase-like_sf"/>
</dbReference>
<dbReference type="InterPro" id="IPR001048">
    <property type="entry name" value="Asp/Glu/Uridylate_kinase"/>
</dbReference>
<dbReference type="InterPro" id="IPR011817">
    <property type="entry name" value="Uridylate_kinase"/>
</dbReference>
<dbReference type="InterPro" id="IPR015963">
    <property type="entry name" value="Uridylate_kinase_bac"/>
</dbReference>
<dbReference type="NCBIfam" id="TIGR02075">
    <property type="entry name" value="pyrH_bact"/>
    <property type="match status" value="1"/>
</dbReference>
<dbReference type="PANTHER" id="PTHR42833">
    <property type="entry name" value="URIDYLATE KINASE"/>
    <property type="match status" value="1"/>
</dbReference>
<dbReference type="PANTHER" id="PTHR42833:SF4">
    <property type="entry name" value="URIDYLATE KINASE PUMPKIN, CHLOROPLASTIC"/>
    <property type="match status" value="1"/>
</dbReference>
<dbReference type="Pfam" id="PF00696">
    <property type="entry name" value="AA_kinase"/>
    <property type="match status" value="1"/>
</dbReference>
<dbReference type="PIRSF" id="PIRSF005650">
    <property type="entry name" value="Uridylate_kin"/>
    <property type="match status" value="1"/>
</dbReference>
<dbReference type="SUPFAM" id="SSF53633">
    <property type="entry name" value="Carbamate kinase-like"/>
    <property type="match status" value="1"/>
</dbReference>
<feature type="chain" id="PRO_0000323787" description="Uridylate kinase">
    <location>
        <begin position="1"/>
        <end position="241"/>
    </location>
</feature>
<feature type="binding site" evidence="1">
    <location>
        <begin position="10"/>
        <end position="13"/>
    </location>
    <ligand>
        <name>ATP</name>
        <dbReference type="ChEBI" id="CHEBI:30616"/>
    </ligand>
</feature>
<feature type="binding site" evidence="1">
    <location>
        <position position="53"/>
    </location>
    <ligand>
        <name>ATP</name>
        <dbReference type="ChEBI" id="CHEBI:30616"/>
    </ligand>
</feature>
<feature type="binding site" evidence="1">
    <location>
        <position position="57"/>
    </location>
    <ligand>
        <name>ATP</name>
        <dbReference type="ChEBI" id="CHEBI:30616"/>
    </ligand>
</feature>
<feature type="binding site" evidence="1">
    <location>
        <position position="72"/>
    </location>
    <ligand>
        <name>UMP</name>
        <dbReference type="ChEBI" id="CHEBI:57865"/>
    </ligand>
</feature>
<feature type="binding site" evidence="1">
    <location>
        <begin position="133"/>
        <end position="140"/>
    </location>
    <ligand>
        <name>UMP</name>
        <dbReference type="ChEBI" id="CHEBI:57865"/>
    </ligand>
</feature>
<feature type="binding site" evidence="1">
    <location>
        <position position="161"/>
    </location>
    <ligand>
        <name>ATP</name>
        <dbReference type="ChEBI" id="CHEBI:30616"/>
    </ligand>
</feature>
<feature type="binding site" evidence="1">
    <location>
        <position position="167"/>
    </location>
    <ligand>
        <name>ATP</name>
        <dbReference type="ChEBI" id="CHEBI:30616"/>
    </ligand>
</feature>
<feature type="binding site" evidence="1">
    <location>
        <position position="170"/>
    </location>
    <ligand>
        <name>ATP</name>
        <dbReference type="ChEBI" id="CHEBI:30616"/>
    </ligand>
</feature>
<name>PYRH_AYWBP</name>
<evidence type="ECO:0000255" key="1">
    <source>
        <dbReference type="HAMAP-Rule" id="MF_01220"/>
    </source>
</evidence>
<accession>Q2NIS4</accession>
<reference key="1">
    <citation type="journal article" date="2006" name="J. Bacteriol.">
        <title>Living with genome instability: the adaptation of phytoplasmas to diverse environments of their insect and plant hosts.</title>
        <authorList>
            <person name="Bai X."/>
            <person name="Zhang J."/>
            <person name="Ewing A."/>
            <person name="Miller S.A."/>
            <person name="Jancso Radek A."/>
            <person name="Shevchenko D.V."/>
            <person name="Tsukerman K."/>
            <person name="Walunas T."/>
            <person name="Lapidus A."/>
            <person name="Campbell J.W."/>
            <person name="Hogenhout S.A."/>
        </authorList>
    </citation>
    <scope>NUCLEOTIDE SEQUENCE [LARGE SCALE GENOMIC DNA]</scope>
    <source>
        <strain>AYWB</strain>
    </source>
</reference>
<gene>
    <name evidence="1" type="primary">pyrH</name>
    <name type="ordered locus">AYWB_552</name>
</gene>